<dbReference type="EMBL" id="CP000967">
    <property type="protein sequence ID" value="ACD61577.1"/>
    <property type="molecule type" value="Genomic_DNA"/>
</dbReference>
<dbReference type="RefSeq" id="WP_012446430.1">
    <property type="nucleotide sequence ID" value="NC_010717.2"/>
</dbReference>
<dbReference type="SMR" id="B2SU25"/>
<dbReference type="KEGG" id="xop:PXO_03239"/>
<dbReference type="eggNOG" id="COG0267">
    <property type="taxonomic scope" value="Bacteria"/>
</dbReference>
<dbReference type="HOGENOM" id="CLU_190949_1_1_6"/>
<dbReference type="Proteomes" id="UP000001740">
    <property type="component" value="Chromosome"/>
</dbReference>
<dbReference type="GO" id="GO:0022625">
    <property type="term" value="C:cytosolic large ribosomal subunit"/>
    <property type="evidence" value="ECO:0007669"/>
    <property type="project" value="TreeGrafter"/>
</dbReference>
<dbReference type="GO" id="GO:0003735">
    <property type="term" value="F:structural constituent of ribosome"/>
    <property type="evidence" value="ECO:0007669"/>
    <property type="project" value="InterPro"/>
</dbReference>
<dbReference type="GO" id="GO:0006412">
    <property type="term" value="P:translation"/>
    <property type="evidence" value="ECO:0007669"/>
    <property type="project" value="UniProtKB-UniRule"/>
</dbReference>
<dbReference type="FunFam" id="2.20.28.120:FF:000001">
    <property type="entry name" value="50S ribosomal protein L33"/>
    <property type="match status" value="1"/>
</dbReference>
<dbReference type="Gene3D" id="2.20.28.120">
    <property type="entry name" value="Ribosomal protein L33"/>
    <property type="match status" value="1"/>
</dbReference>
<dbReference type="HAMAP" id="MF_00294">
    <property type="entry name" value="Ribosomal_bL33"/>
    <property type="match status" value="1"/>
</dbReference>
<dbReference type="InterPro" id="IPR001705">
    <property type="entry name" value="Ribosomal_bL33"/>
</dbReference>
<dbReference type="InterPro" id="IPR018264">
    <property type="entry name" value="Ribosomal_bL33_CS"/>
</dbReference>
<dbReference type="InterPro" id="IPR038584">
    <property type="entry name" value="Ribosomal_bL33_sf"/>
</dbReference>
<dbReference type="InterPro" id="IPR011332">
    <property type="entry name" value="Ribosomal_zn-bd"/>
</dbReference>
<dbReference type="NCBIfam" id="NF001860">
    <property type="entry name" value="PRK00595.1"/>
    <property type="match status" value="1"/>
</dbReference>
<dbReference type="NCBIfam" id="TIGR01023">
    <property type="entry name" value="rpmG_bact"/>
    <property type="match status" value="1"/>
</dbReference>
<dbReference type="PANTHER" id="PTHR15238">
    <property type="entry name" value="54S RIBOSOMAL PROTEIN L39, MITOCHONDRIAL"/>
    <property type="match status" value="1"/>
</dbReference>
<dbReference type="PANTHER" id="PTHR15238:SF1">
    <property type="entry name" value="LARGE RIBOSOMAL SUBUNIT PROTEIN BL33M"/>
    <property type="match status" value="1"/>
</dbReference>
<dbReference type="Pfam" id="PF00471">
    <property type="entry name" value="Ribosomal_L33"/>
    <property type="match status" value="1"/>
</dbReference>
<dbReference type="SUPFAM" id="SSF57829">
    <property type="entry name" value="Zn-binding ribosomal proteins"/>
    <property type="match status" value="1"/>
</dbReference>
<dbReference type="PROSITE" id="PS00582">
    <property type="entry name" value="RIBOSOMAL_L33"/>
    <property type="match status" value="1"/>
</dbReference>
<accession>B2SU25</accession>
<name>RL33_XANOP</name>
<protein>
    <recommendedName>
        <fullName evidence="1">Large ribosomal subunit protein bL33</fullName>
    </recommendedName>
    <alternativeName>
        <fullName evidence="2">50S ribosomal protein L33</fullName>
    </alternativeName>
</protein>
<comment type="similarity">
    <text evidence="1">Belongs to the bacterial ribosomal protein bL33 family.</text>
</comment>
<feature type="chain" id="PRO_1000115166" description="Large ribosomal subunit protein bL33">
    <location>
        <begin position="1"/>
        <end position="55"/>
    </location>
</feature>
<evidence type="ECO:0000255" key="1">
    <source>
        <dbReference type="HAMAP-Rule" id="MF_00294"/>
    </source>
</evidence>
<evidence type="ECO:0000305" key="2"/>
<reference key="1">
    <citation type="journal article" date="2008" name="BMC Genomics">
        <title>Genome sequence and rapid evolution of the rice pathogen Xanthomonas oryzae pv. oryzae PXO99A.</title>
        <authorList>
            <person name="Salzberg S.L."/>
            <person name="Sommer D.D."/>
            <person name="Schatz M.C."/>
            <person name="Phillippy A.M."/>
            <person name="Rabinowicz P.D."/>
            <person name="Tsuge S."/>
            <person name="Furutani A."/>
            <person name="Ochiai H."/>
            <person name="Delcher A.L."/>
            <person name="Kelley D."/>
            <person name="Madupu R."/>
            <person name="Puiu D."/>
            <person name="Radune D."/>
            <person name="Shumway M."/>
            <person name="Trapnell C."/>
            <person name="Aparna G."/>
            <person name="Jha G."/>
            <person name="Pandey A."/>
            <person name="Patil P.B."/>
            <person name="Ishihara H."/>
            <person name="Meyer D.F."/>
            <person name="Szurek B."/>
            <person name="Verdier V."/>
            <person name="Koebnik R."/>
            <person name="Dow J.M."/>
            <person name="Ryan R.P."/>
            <person name="Hirata H."/>
            <person name="Tsuyumu S."/>
            <person name="Won Lee S."/>
            <person name="Seo Y.-S."/>
            <person name="Sriariyanum M."/>
            <person name="Ronald P.C."/>
            <person name="Sonti R.V."/>
            <person name="Van Sluys M.-A."/>
            <person name="Leach J.E."/>
            <person name="White F.F."/>
            <person name="Bogdanove A.J."/>
        </authorList>
    </citation>
    <scope>NUCLEOTIDE SEQUENCE [LARGE SCALE GENOMIC DNA]</scope>
    <source>
        <strain>PXO99A</strain>
    </source>
</reference>
<organism>
    <name type="scientific">Xanthomonas oryzae pv. oryzae (strain PXO99A)</name>
    <dbReference type="NCBI Taxonomy" id="360094"/>
    <lineage>
        <taxon>Bacteria</taxon>
        <taxon>Pseudomonadati</taxon>
        <taxon>Pseudomonadota</taxon>
        <taxon>Gammaproteobacteria</taxon>
        <taxon>Lysobacterales</taxon>
        <taxon>Lysobacteraceae</taxon>
        <taxon>Xanthomonas</taxon>
    </lineage>
</organism>
<keyword id="KW-0687">Ribonucleoprotein</keyword>
<keyword id="KW-0689">Ribosomal protein</keyword>
<proteinExistence type="inferred from homology"/>
<sequence>MAKGKRDKIRMVSSAATGHFYTTDKNKKNTPGKMEMMKYDPVVRKHVMYKEGKIK</sequence>
<gene>
    <name evidence="1" type="primary">rpmG</name>
    <name type="ordered locus">PXO_03239</name>
</gene>